<organism>
    <name type="scientific">Shewanella baltica (strain OS155 / ATCC BAA-1091)</name>
    <dbReference type="NCBI Taxonomy" id="325240"/>
    <lineage>
        <taxon>Bacteria</taxon>
        <taxon>Pseudomonadati</taxon>
        <taxon>Pseudomonadota</taxon>
        <taxon>Gammaproteobacteria</taxon>
        <taxon>Alteromonadales</taxon>
        <taxon>Shewanellaceae</taxon>
        <taxon>Shewanella</taxon>
    </lineage>
</organism>
<proteinExistence type="inferred from homology"/>
<comment type="function">
    <text evidence="1">Specifically methylates position 2 of adenine 2503 in 23S rRNA and position 2 of adenine 37 in tRNAs. m2A2503 modification seems to play a crucial role in the proofreading step occurring at the peptidyl transferase center and thus would serve to optimize ribosomal fidelity.</text>
</comment>
<comment type="catalytic activity">
    <reaction evidence="1">
        <text>adenosine(2503) in 23S rRNA + 2 reduced [2Fe-2S]-[ferredoxin] + 2 S-adenosyl-L-methionine = 2-methyladenosine(2503) in 23S rRNA + 5'-deoxyadenosine + L-methionine + 2 oxidized [2Fe-2S]-[ferredoxin] + S-adenosyl-L-homocysteine</text>
        <dbReference type="Rhea" id="RHEA:42916"/>
        <dbReference type="Rhea" id="RHEA-COMP:10000"/>
        <dbReference type="Rhea" id="RHEA-COMP:10001"/>
        <dbReference type="Rhea" id="RHEA-COMP:10152"/>
        <dbReference type="Rhea" id="RHEA-COMP:10282"/>
        <dbReference type="ChEBI" id="CHEBI:17319"/>
        <dbReference type="ChEBI" id="CHEBI:33737"/>
        <dbReference type="ChEBI" id="CHEBI:33738"/>
        <dbReference type="ChEBI" id="CHEBI:57844"/>
        <dbReference type="ChEBI" id="CHEBI:57856"/>
        <dbReference type="ChEBI" id="CHEBI:59789"/>
        <dbReference type="ChEBI" id="CHEBI:74411"/>
        <dbReference type="ChEBI" id="CHEBI:74497"/>
        <dbReference type="EC" id="2.1.1.192"/>
    </reaction>
</comment>
<comment type="catalytic activity">
    <reaction evidence="1">
        <text>adenosine(37) in tRNA + 2 reduced [2Fe-2S]-[ferredoxin] + 2 S-adenosyl-L-methionine = 2-methyladenosine(37) in tRNA + 5'-deoxyadenosine + L-methionine + 2 oxidized [2Fe-2S]-[ferredoxin] + S-adenosyl-L-homocysteine</text>
        <dbReference type="Rhea" id="RHEA:43332"/>
        <dbReference type="Rhea" id="RHEA-COMP:10000"/>
        <dbReference type="Rhea" id="RHEA-COMP:10001"/>
        <dbReference type="Rhea" id="RHEA-COMP:10162"/>
        <dbReference type="Rhea" id="RHEA-COMP:10485"/>
        <dbReference type="ChEBI" id="CHEBI:17319"/>
        <dbReference type="ChEBI" id="CHEBI:33737"/>
        <dbReference type="ChEBI" id="CHEBI:33738"/>
        <dbReference type="ChEBI" id="CHEBI:57844"/>
        <dbReference type="ChEBI" id="CHEBI:57856"/>
        <dbReference type="ChEBI" id="CHEBI:59789"/>
        <dbReference type="ChEBI" id="CHEBI:74411"/>
        <dbReference type="ChEBI" id="CHEBI:74497"/>
        <dbReference type="EC" id="2.1.1.192"/>
    </reaction>
</comment>
<comment type="cofactor">
    <cofactor evidence="1">
        <name>[4Fe-4S] cluster</name>
        <dbReference type="ChEBI" id="CHEBI:49883"/>
    </cofactor>
    <text evidence="1">Binds 1 [4Fe-4S] cluster. The cluster is coordinated with 3 cysteines and an exchangeable S-adenosyl-L-methionine.</text>
</comment>
<comment type="subcellular location">
    <subcellularLocation>
        <location evidence="1">Cytoplasm</location>
    </subcellularLocation>
</comment>
<comment type="miscellaneous">
    <text evidence="1">Reaction proceeds by a ping-pong mechanism involving intermediate methylation of a conserved cysteine residue.</text>
</comment>
<comment type="similarity">
    <text evidence="1">Belongs to the radical SAM superfamily. RlmN family.</text>
</comment>
<evidence type="ECO:0000255" key="1">
    <source>
        <dbReference type="HAMAP-Rule" id="MF_01849"/>
    </source>
</evidence>
<evidence type="ECO:0000255" key="2">
    <source>
        <dbReference type="PROSITE-ProRule" id="PRU01266"/>
    </source>
</evidence>
<keyword id="KW-0004">4Fe-4S</keyword>
<keyword id="KW-0963">Cytoplasm</keyword>
<keyword id="KW-1015">Disulfide bond</keyword>
<keyword id="KW-0408">Iron</keyword>
<keyword id="KW-0411">Iron-sulfur</keyword>
<keyword id="KW-0479">Metal-binding</keyword>
<keyword id="KW-0489">Methyltransferase</keyword>
<keyword id="KW-1185">Reference proteome</keyword>
<keyword id="KW-0698">rRNA processing</keyword>
<keyword id="KW-0949">S-adenosyl-L-methionine</keyword>
<keyword id="KW-0808">Transferase</keyword>
<keyword id="KW-0819">tRNA processing</keyword>
<name>RLMN_SHEB5</name>
<reference key="1">
    <citation type="submission" date="2007-02" db="EMBL/GenBank/DDBJ databases">
        <title>Complete sequence of chromosome of Shewanella baltica OS155.</title>
        <authorList>
            <consortium name="US DOE Joint Genome Institute"/>
            <person name="Copeland A."/>
            <person name="Lucas S."/>
            <person name="Lapidus A."/>
            <person name="Barry K."/>
            <person name="Detter J.C."/>
            <person name="Glavina del Rio T."/>
            <person name="Hammon N."/>
            <person name="Israni S."/>
            <person name="Dalin E."/>
            <person name="Tice H."/>
            <person name="Pitluck S."/>
            <person name="Sims D.R."/>
            <person name="Brettin T."/>
            <person name="Bruce D."/>
            <person name="Han C."/>
            <person name="Tapia R."/>
            <person name="Brainard J."/>
            <person name="Schmutz J."/>
            <person name="Larimer F."/>
            <person name="Land M."/>
            <person name="Hauser L."/>
            <person name="Kyrpides N."/>
            <person name="Mikhailova N."/>
            <person name="Brettar I."/>
            <person name="Klappenbach J."/>
            <person name="Konstantinidis K."/>
            <person name="Rodrigues J."/>
            <person name="Tiedje J."/>
            <person name="Richardson P."/>
        </authorList>
    </citation>
    <scope>NUCLEOTIDE SEQUENCE [LARGE SCALE GENOMIC DNA]</scope>
    <source>
        <strain>OS155 / ATCC BAA-1091</strain>
    </source>
</reference>
<feature type="chain" id="PRO_0000350393" description="Dual-specificity RNA methyltransferase RlmN">
    <location>
        <begin position="1"/>
        <end position="373"/>
    </location>
</feature>
<feature type="domain" description="Radical SAM core" evidence="2">
    <location>
        <begin position="100"/>
        <end position="339"/>
    </location>
</feature>
<feature type="active site" description="Proton acceptor" evidence="1">
    <location>
        <position position="94"/>
    </location>
</feature>
<feature type="active site" description="S-methylcysteine intermediate" evidence="1">
    <location>
        <position position="344"/>
    </location>
</feature>
<feature type="binding site" evidence="1">
    <location>
        <position position="114"/>
    </location>
    <ligand>
        <name>[4Fe-4S] cluster</name>
        <dbReference type="ChEBI" id="CHEBI:49883"/>
        <note>4Fe-4S-S-AdoMet</note>
    </ligand>
</feature>
<feature type="binding site" evidence="1">
    <location>
        <position position="118"/>
    </location>
    <ligand>
        <name>[4Fe-4S] cluster</name>
        <dbReference type="ChEBI" id="CHEBI:49883"/>
        <note>4Fe-4S-S-AdoMet</note>
    </ligand>
</feature>
<feature type="binding site" evidence="1">
    <location>
        <position position="121"/>
    </location>
    <ligand>
        <name>[4Fe-4S] cluster</name>
        <dbReference type="ChEBI" id="CHEBI:49883"/>
        <note>4Fe-4S-S-AdoMet</note>
    </ligand>
</feature>
<feature type="binding site" evidence="1">
    <location>
        <begin position="168"/>
        <end position="169"/>
    </location>
    <ligand>
        <name>S-adenosyl-L-methionine</name>
        <dbReference type="ChEBI" id="CHEBI:59789"/>
    </ligand>
</feature>
<feature type="binding site" evidence="1">
    <location>
        <position position="200"/>
    </location>
    <ligand>
        <name>S-adenosyl-L-methionine</name>
        <dbReference type="ChEBI" id="CHEBI:59789"/>
    </ligand>
</feature>
<feature type="binding site" evidence="1">
    <location>
        <begin position="222"/>
        <end position="224"/>
    </location>
    <ligand>
        <name>S-adenosyl-L-methionine</name>
        <dbReference type="ChEBI" id="CHEBI:59789"/>
    </ligand>
</feature>
<feature type="binding site" evidence="1">
    <location>
        <position position="301"/>
    </location>
    <ligand>
        <name>S-adenosyl-L-methionine</name>
        <dbReference type="ChEBI" id="CHEBI:59789"/>
    </ligand>
</feature>
<feature type="disulfide bond" description="(transient)" evidence="1">
    <location>
        <begin position="107"/>
        <end position="344"/>
    </location>
</feature>
<dbReference type="EC" id="2.1.1.192" evidence="1"/>
<dbReference type="EMBL" id="CP000563">
    <property type="protein sequence ID" value="ABN62475.1"/>
    <property type="molecule type" value="Genomic_DNA"/>
</dbReference>
<dbReference type="RefSeq" id="WP_011847345.1">
    <property type="nucleotide sequence ID" value="NC_009052.1"/>
</dbReference>
<dbReference type="SMR" id="A3D6W2"/>
<dbReference type="STRING" id="325240.Sbal_2993"/>
<dbReference type="KEGG" id="sbl:Sbal_2993"/>
<dbReference type="HOGENOM" id="CLU_029101_2_0_6"/>
<dbReference type="OrthoDB" id="9793973at2"/>
<dbReference type="Proteomes" id="UP000001557">
    <property type="component" value="Chromosome"/>
</dbReference>
<dbReference type="GO" id="GO:0005737">
    <property type="term" value="C:cytoplasm"/>
    <property type="evidence" value="ECO:0007669"/>
    <property type="project" value="UniProtKB-SubCell"/>
</dbReference>
<dbReference type="GO" id="GO:0051539">
    <property type="term" value="F:4 iron, 4 sulfur cluster binding"/>
    <property type="evidence" value="ECO:0007669"/>
    <property type="project" value="UniProtKB-UniRule"/>
</dbReference>
<dbReference type="GO" id="GO:0046872">
    <property type="term" value="F:metal ion binding"/>
    <property type="evidence" value="ECO:0007669"/>
    <property type="project" value="UniProtKB-KW"/>
</dbReference>
<dbReference type="GO" id="GO:0070040">
    <property type="term" value="F:rRNA (adenine(2503)-C2-)-methyltransferase activity"/>
    <property type="evidence" value="ECO:0007669"/>
    <property type="project" value="UniProtKB-UniRule"/>
</dbReference>
<dbReference type="GO" id="GO:0019843">
    <property type="term" value="F:rRNA binding"/>
    <property type="evidence" value="ECO:0007669"/>
    <property type="project" value="UniProtKB-UniRule"/>
</dbReference>
<dbReference type="GO" id="GO:0002935">
    <property type="term" value="F:tRNA (adenine(37)-C2)-methyltransferase activity"/>
    <property type="evidence" value="ECO:0007669"/>
    <property type="project" value="UniProtKB-UniRule"/>
</dbReference>
<dbReference type="GO" id="GO:0000049">
    <property type="term" value="F:tRNA binding"/>
    <property type="evidence" value="ECO:0007669"/>
    <property type="project" value="UniProtKB-UniRule"/>
</dbReference>
<dbReference type="GO" id="GO:0070475">
    <property type="term" value="P:rRNA base methylation"/>
    <property type="evidence" value="ECO:0007669"/>
    <property type="project" value="UniProtKB-UniRule"/>
</dbReference>
<dbReference type="GO" id="GO:0030488">
    <property type="term" value="P:tRNA methylation"/>
    <property type="evidence" value="ECO:0007669"/>
    <property type="project" value="UniProtKB-UniRule"/>
</dbReference>
<dbReference type="CDD" id="cd01335">
    <property type="entry name" value="Radical_SAM"/>
    <property type="match status" value="1"/>
</dbReference>
<dbReference type="FunFam" id="1.10.150.530:FF:000003">
    <property type="entry name" value="Dual-specificity RNA methyltransferase RlmN"/>
    <property type="match status" value="1"/>
</dbReference>
<dbReference type="FunFam" id="3.20.20.70:FF:000008">
    <property type="entry name" value="Dual-specificity RNA methyltransferase RlmN"/>
    <property type="match status" value="1"/>
</dbReference>
<dbReference type="Gene3D" id="1.10.150.530">
    <property type="match status" value="1"/>
</dbReference>
<dbReference type="Gene3D" id="3.20.20.70">
    <property type="entry name" value="Aldolase class I"/>
    <property type="match status" value="1"/>
</dbReference>
<dbReference type="HAMAP" id="MF_01849">
    <property type="entry name" value="RNA_methyltr_RlmN"/>
    <property type="match status" value="1"/>
</dbReference>
<dbReference type="InterPro" id="IPR013785">
    <property type="entry name" value="Aldolase_TIM"/>
</dbReference>
<dbReference type="InterPro" id="IPR040072">
    <property type="entry name" value="Methyltransferase_A"/>
</dbReference>
<dbReference type="InterPro" id="IPR048641">
    <property type="entry name" value="RlmN_N"/>
</dbReference>
<dbReference type="InterPro" id="IPR027492">
    <property type="entry name" value="RNA_MTrfase_RlmN"/>
</dbReference>
<dbReference type="InterPro" id="IPR004383">
    <property type="entry name" value="rRNA_lsu_MTrfase_RlmN/Cfr"/>
</dbReference>
<dbReference type="InterPro" id="IPR007197">
    <property type="entry name" value="rSAM"/>
</dbReference>
<dbReference type="NCBIfam" id="NF008396">
    <property type="entry name" value="PRK11194.1"/>
    <property type="match status" value="1"/>
</dbReference>
<dbReference type="NCBIfam" id="TIGR00048">
    <property type="entry name" value="rRNA_mod_RlmN"/>
    <property type="match status" value="1"/>
</dbReference>
<dbReference type="PANTHER" id="PTHR30544">
    <property type="entry name" value="23S RRNA METHYLTRANSFERASE"/>
    <property type="match status" value="1"/>
</dbReference>
<dbReference type="PANTHER" id="PTHR30544:SF5">
    <property type="entry name" value="RADICAL SAM CORE DOMAIN-CONTAINING PROTEIN"/>
    <property type="match status" value="1"/>
</dbReference>
<dbReference type="Pfam" id="PF04055">
    <property type="entry name" value="Radical_SAM"/>
    <property type="match status" value="1"/>
</dbReference>
<dbReference type="Pfam" id="PF21016">
    <property type="entry name" value="RlmN_N"/>
    <property type="match status" value="1"/>
</dbReference>
<dbReference type="PIRSF" id="PIRSF006004">
    <property type="entry name" value="CHP00048"/>
    <property type="match status" value="1"/>
</dbReference>
<dbReference type="SFLD" id="SFLDF00275">
    <property type="entry name" value="adenosine_C2_methyltransferase"/>
    <property type="match status" value="1"/>
</dbReference>
<dbReference type="SFLD" id="SFLDS00029">
    <property type="entry name" value="Radical_SAM"/>
    <property type="match status" value="1"/>
</dbReference>
<dbReference type="SUPFAM" id="SSF102114">
    <property type="entry name" value="Radical SAM enzymes"/>
    <property type="match status" value="1"/>
</dbReference>
<dbReference type="PROSITE" id="PS51918">
    <property type="entry name" value="RADICAL_SAM"/>
    <property type="match status" value="1"/>
</dbReference>
<accession>A3D6W2</accession>
<protein>
    <recommendedName>
        <fullName evidence="1">Dual-specificity RNA methyltransferase RlmN</fullName>
        <ecNumber evidence="1">2.1.1.192</ecNumber>
    </recommendedName>
    <alternativeName>
        <fullName evidence="1">23S rRNA (adenine(2503)-C(2))-methyltransferase</fullName>
    </alternativeName>
    <alternativeName>
        <fullName evidence="1">23S rRNA m2A2503 methyltransferase</fullName>
    </alternativeName>
    <alternativeName>
        <fullName evidence="1">Ribosomal RNA large subunit methyltransferase N</fullName>
    </alternativeName>
    <alternativeName>
        <fullName evidence="1">tRNA (adenine(37)-C(2))-methyltransferase</fullName>
    </alternativeName>
    <alternativeName>
        <fullName evidence="1">tRNA m2A37 methyltransferase</fullName>
    </alternativeName>
</protein>
<gene>
    <name evidence="1" type="primary">rlmN</name>
    <name type="ordered locus">Sbal_2993</name>
</gene>
<sequence length="373" mass="41728">MSEKKINLLDLDRKAMRALFADMGEKPFRADQLMKWLYHFGVSDFEEMTNINKVLRQKLAARCEIVAPEISSFQKSTDGTIKFAINVGQGQEVETVYIPEDDRATLCVSSQVGCALECTFCSTGQQGFNRNLTVSEIVGQIWRVSHFLGFAKDTGERPITNVVMMGMGEPLLNLANVIPAMDIMLDDFGFSLSKRRVTLSTSGVVPALDKLGDAIDVALAVSIHAPNDELRDILVPINKKYQLDEFLAGIRRYIAKSNANRGRVTVEYVMLDHINDSTDQAHELAKLMKDTPCKINLIPFNPYPGSPYGRSSNSRIDRFSKVLMEYGFTVIVRKTRGDDIDAACGQLAGDIRDRTKRLAKKRMQENQISVTMN</sequence>